<protein>
    <recommendedName>
        <fullName>Protein unc-119</fullName>
    </recommendedName>
    <alternativeName>
        <fullName>Uncoordinated protein 119</fullName>
    </alternativeName>
</protein>
<sequence>MKAEQQQSIPPGSATFPSQMPRPPPSTEQGITTESELAKKAQITPNDVLALPGITQGFLCSPSANIYNIEFTKFQIRDLDTEQVLFEIAKPENDQENDESPQESARYVRYRFAPNFLKLKTVGATVEFKVGDIPIHHFRMIERHFFKDRLLKCFDFEFGFCIPNSRNNCEHIYEFPQLSQQLMDDMINNPNETRSDSFYFVDNKLVMHNKADYSYDA</sequence>
<keyword id="KW-0970">Cilium biogenesis/degradation</keyword>
<keyword id="KW-0217">Developmental protein</keyword>
<keyword id="KW-0446">Lipid-binding</keyword>
<keyword id="KW-0653">Protein transport</keyword>
<keyword id="KW-1185">Reference proteome</keyword>
<keyword id="KW-0813">Transport</keyword>
<reference key="1">
    <citation type="journal article" date="1996" name="Gene">
        <title>Conservation of function and expression of unc-119 from two Caenorhabditis species despite divergence of non-coding DNA.</title>
        <authorList>
            <person name="Maduro M.F."/>
            <person name="Pilgrim D.B."/>
        </authorList>
    </citation>
    <scope>NUCLEOTIDE SEQUENCE [GENOMIC DNA]</scope>
</reference>
<reference key="2">
    <citation type="journal article" date="2003" name="PLoS Biol.">
        <title>The genome sequence of Caenorhabditis briggsae: a platform for comparative genomics.</title>
        <authorList>
            <person name="Stein L.D."/>
            <person name="Bao Z."/>
            <person name="Blasiar D."/>
            <person name="Blumenthal T."/>
            <person name="Brent M.R."/>
            <person name="Chen N."/>
            <person name="Chinwalla A."/>
            <person name="Clarke L."/>
            <person name="Clee C."/>
            <person name="Coghlan A."/>
            <person name="Coulson A."/>
            <person name="D'Eustachio P."/>
            <person name="Fitch D.H.A."/>
            <person name="Fulton L.A."/>
            <person name="Fulton R.E."/>
            <person name="Griffiths-Jones S."/>
            <person name="Harris T.W."/>
            <person name="Hillier L.W."/>
            <person name="Kamath R."/>
            <person name="Kuwabara P.E."/>
            <person name="Mardis E.R."/>
            <person name="Marra M.A."/>
            <person name="Miner T.L."/>
            <person name="Minx P."/>
            <person name="Mullikin J.C."/>
            <person name="Plumb R.W."/>
            <person name="Rogers J."/>
            <person name="Schein J.E."/>
            <person name="Sohrmann M."/>
            <person name="Spieth J."/>
            <person name="Stajich J.E."/>
            <person name="Wei C."/>
            <person name="Willey D."/>
            <person name="Wilson R.K."/>
            <person name="Durbin R.M."/>
            <person name="Waterston R.H."/>
        </authorList>
    </citation>
    <scope>NUCLEOTIDE SEQUENCE [LARGE SCALE GENOMIC DNA]</scope>
    <source>
        <strain>AF16</strain>
    </source>
</reference>
<evidence type="ECO:0000250" key="1"/>
<evidence type="ECO:0000256" key="2">
    <source>
        <dbReference type="SAM" id="MobiDB-lite"/>
    </source>
</evidence>
<evidence type="ECO:0000305" key="3"/>
<dbReference type="EMBL" id="U45326">
    <property type="protein sequence ID" value="AAB41283.1"/>
    <property type="molecule type" value="Genomic_DNA"/>
</dbReference>
<dbReference type="EMBL" id="HE600936">
    <property type="protein sequence ID" value="CAP35768.1"/>
    <property type="molecule type" value="Genomic_DNA"/>
</dbReference>
<dbReference type="PIR" id="JC5728">
    <property type="entry name" value="JC5728"/>
</dbReference>
<dbReference type="FunCoup" id="Q17297">
    <property type="interactions" value="1682"/>
</dbReference>
<dbReference type="STRING" id="6238.Q17297"/>
<dbReference type="EnsemblMetazoa" id="CBG18291a.1">
    <property type="protein sequence ID" value="CBG18291a.1"/>
    <property type="gene ID" value="WBGene00037738"/>
</dbReference>
<dbReference type="EnsemblMetazoa" id="CBG18291a.2">
    <property type="protein sequence ID" value="CBG18291a.2"/>
    <property type="gene ID" value="WBGene00037738"/>
</dbReference>
<dbReference type="KEGG" id="cbr:CBG_18291"/>
<dbReference type="CTD" id="8584293"/>
<dbReference type="WormBase" id="CBG18291a">
    <property type="protein sequence ID" value="CBP04305"/>
    <property type="gene ID" value="WBGene00037738"/>
    <property type="gene designation" value="Cbr-unc-119"/>
</dbReference>
<dbReference type="eggNOG" id="KOG4037">
    <property type="taxonomic scope" value="Eukaryota"/>
</dbReference>
<dbReference type="HOGENOM" id="CLU_088825_0_0_1"/>
<dbReference type="InParanoid" id="Q17297"/>
<dbReference type="OMA" id="IYNIEFT"/>
<dbReference type="Proteomes" id="UP000008549">
    <property type="component" value="Unassembled WGS sequence"/>
</dbReference>
<dbReference type="GO" id="GO:0005929">
    <property type="term" value="C:cilium"/>
    <property type="evidence" value="ECO:0000318"/>
    <property type="project" value="GO_Central"/>
</dbReference>
<dbReference type="GO" id="GO:0008289">
    <property type="term" value="F:lipid binding"/>
    <property type="evidence" value="ECO:0000318"/>
    <property type="project" value="GO_Central"/>
</dbReference>
<dbReference type="GO" id="GO:0060271">
    <property type="term" value="P:cilium assembly"/>
    <property type="evidence" value="ECO:0000318"/>
    <property type="project" value="GO_Central"/>
</dbReference>
<dbReference type="GO" id="GO:0042953">
    <property type="term" value="P:lipoprotein transport"/>
    <property type="evidence" value="ECO:0000318"/>
    <property type="project" value="GO_Central"/>
</dbReference>
<dbReference type="GO" id="GO:0007399">
    <property type="term" value="P:nervous system development"/>
    <property type="evidence" value="ECO:0000318"/>
    <property type="project" value="GO_Central"/>
</dbReference>
<dbReference type="FunFam" id="2.70.50.40:FF:000005">
    <property type="entry name" value="Protein unc-119"/>
    <property type="match status" value="1"/>
</dbReference>
<dbReference type="Gene3D" id="2.70.50.40">
    <property type="entry name" value="GMP phosphodiesterase, delta subunit"/>
    <property type="match status" value="1"/>
</dbReference>
<dbReference type="InterPro" id="IPR014756">
    <property type="entry name" value="Ig_E-set"/>
</dbReference>
<dbReference type="InterPro" id="IPR051519">
    <property type="entry name" value="PDE6D_unc-119_myristoyl-bd"/>
</dbReference>
<dbReference type="InterPro" id="IPR008015">
    <property type="entry name" value="PDED_dom"/>
</dbReference>
<dbReference type="InterPro" id="IPR037036">
    <property type="entry name" value="PDED_dom_sf"/>
</dbReference>
<dbReference type="PANTHER" id="PTHR12951:SF1">
    <property type="entry name" value="PROTEIN UNC-119 HOMOLOG"/>
    <property type="match status" value="1"/>
</dbReference>
<dbReference type="PANTHER" id="PTHR12951">
    <property type="entry name" value="RETINAL PROTEIN 4"/>
    <property type="match status" value="1"/>
</dbReference>
<dbReference type="Pfam" id="PF05351">
    <property type="entry name" value="GMP_PDE_delta"/>
    <property type="match status" value="1"/>
</dbReference>
<dbReference type="SUPFAM" id="SSF81296">
    <property type="entry name" value="E set domains"/>
    <property type="match status" value="1"/>
</dbReference>
<comment type="function">
    <text evidence="1">Myristoyl-binding protein that acts as a cargo adapter: specifically binds the myristoyl moiety of a subset of N-terminally myristoylated proteins and is required for their localization. Plays a key role in ciliary membrane localization of proteins. Required for the establishment or function of the nervous system (By similarity).</text>
</comment>
<comment type="domain">
    <text evidence="1">Adopts an immunoglobulin-like beta-sandwich fold forming a hydrophobic cavity that capture N-terminally myristoylated target peptides. Phe residues within the hydrophobic beta sandwich are required for myristate binding (By similarity).</text>
</comment>
<comment type="similarity">
    <text evidence="3">Belongs to the PDE6D/unc-119 family.</text>
</comment>
<name>UN119_CAEBR</name>
<proteinExistence type="inferred from homology"/>
<gene>
    <name type="primary">unc-119</name>
    <name type="ORF">CBG18291</name>
</gene>
<feature type="chain" id="PRO_0000221215" description="Protein unc-119">
    <location>
        <begin position="1"/>
        <end position="217"/>
    </location>
</feature>
<feature type="region of interest" description="Disordered" evidence="2">
    <location>
        <begin position="1"/>
        <end position="31"/>
    </location>
</feature>
<feature type="compositionally biased region" description="Polar residues" evidence="2">
    <location>
        <begin position="1"/>
        <end position="18"/>
    </location>
</feature>
<feature type="binding site" evidence="1">
    <location>
        <position position="110"/>
    </location>
    <ligand>
        <name>tetradecanoate</name>
        <dbReference type="ChEBI" id="CHEBI:30807"/>
    </ligand>
</feature>
<feature type="sequence conflict" description="In Ref. 1; AAB41283." evidence="3" ref="1">
    <original>K</original>
    <variation>F</variation>
    <location>
        <position position="147"/>
    </location>
</feature>
<organism>
    <name type="scientific">Caenorhabditis briggsae</name>
    <dbReference type="NCBI Taxonomy" id="6238"/>
    <lineage>
        <taxon>Eukaryota</taxon>
        <taxon>Metazoa</taxon>
        <taxon>Ecdysozoa</taxon>
        <taxon>Nematoda</taxon>
        <taxon>Chromadorea</taxon>
        <taxon>Rhabditida</taxon>
        <taxon>Rhabditina</taxon>
        <taxon>Rhabditomorpha</taxon>
        <taxon>Rhabditoidea</taxon>
        <taxon>Rhabditidae</taxon>
        <taxon>Peloderinae</taxon>
        <taxon>Caenorhabditis</taxon>
    </lineage>
</organism>
<accession>Q17297</accession>
<accession>A8XSC6</accession>
<accession>Q60YD0</accession>